<evidence type="ECO:0000250" key="1"/>
<evidence type="ECO:0000250" key="2">
    <source>
        <dbReference type="UniProtKB" id="P23142"/>
    </source>
</evidence>
<evidence type="ECO:0000255" key="3"/>
<evidence type="ECO:0000255" key="4">
    <source>
        <dbReference type="PROSITE-ProRule" id="PRU00022"/>
    </source>
</evidence>
<evidence type="ECO:0000255" key="5">
    <source>
        <dbReference type="PROSITE-ProRule" id="PRU00076"/>
    </source>
</evidence>
<evidence type="ECO:0000269" key="6">
    <source>
    </source>
</evidence>
<evidence type="ECO:0000305" key="7"/>
<protein>
    <recommendedName>
        <fullName>Fibulin-1</fullName>
        <shortName>FIBL-1</shortName>
    </recommendedName>
</protein>
<sequence>ANEQDHCAAPRGDNASLEATFVKRCCHCCLLGRAAQAQGQSCEYNLMVGYQCGQVFRACCVKSQETGDLDVRSLQETDKITEVEEEQEDPYLNDRCRGGGPCKQQCRDTGDEVVCSCFVGYQLLSDGVSCEDVNECITGSHSCRLGESCINTVGSFRCQRDSSCGTGYELTEDNSCKDIDQCESGIHNCLPDFICQNTLGSFRCRPKLQCKNGFIQDALANCIDINECLSIVSAPCPTGHTCINTEGSYTQKNVPNCGRGYHLNEEGTRCDVNECAPPAEPCGKGHRCVNSPGSFRCECKTGYYFDGISRMCVDVNECQRYPGRLCGHKCENTLGSYVCSCSVGFRLSVDGRSCEDINECSSSPCSQECANVYGSYQCYCRRGYQLSDVDGVTCEDIDECALPTGGHICSYRCINIPGSFQCSCPASGYRLAPNGRNCQDIDECVTGIHNCSINETCFNIQGGFRCLAFECPENYRRSAATRCERLPCHENRECSKLPLRITYYHLSFPTNIQAPAVVFRMGPSSAVPGDSMQLAITGGNEEGFFTTRKVSPHSGVVALTKPVPEPRDLLLTVKMDLYRHGTVSSFVAKLFIFVSAEL</sequence>
<reference key="1">
    <citation type="journal article" date="2002" name="BMC Cell Biol.">
        <title>Latent transforming growth factor beta-binding protein-3 and fibulin-1C interact with the extracellular domain of the heparin-binding EGF-like growth factor precursor.</title>
        <authorList>
            <person name="Brooke J.S."/>
            <person name="Cha J.-H."/>
            <person name="Eidels L."/>
        </authorList>
    </citation>
    <scope>NUCLEOTIDE SEQUENCE [MRNA]</scope>
    <scope>INTERACTION WITH DTR</scope>
</reference>
<proteinExistence type="evidence at protein level"/>
<accession>Q8MJJ9</accession>
<name>FBLN1_CHLAE</name>
<comment type="function">
    <text>Incorporated into fibronectin-containing matrix fibers. May play a role in cell adhesion and migration along protein fibers within the extracellular matrix (ECM). Could be important for certain developmental processes and contribute to the supramolecular organization of ECM architecture, in particular to those of basement membranes. May serve to anchor the mature/soluble form of DTR to its fibers as it migrates through the extracellular matrix. The direct physical association with DTR may be useful in such tissue developmental processes as wound healing.</text>
</comment>
<comment type="subunit">
    <text evidence="1 2 6">Homomultimerizes and interacts with various extracellular matrix components. Interacts with FBLN7 (By similarity). Interacts with the mature/soluble form of DTR. Interacts with CCN3 (By similarity).</text>
</comment>
<comment type="subcellular location">
    <subcellularLocation>
        <location>Secreted</location>
        <location>Extracellular space</location>
        <location>Extracellular matrix</location>
    </subcellularLocation>
</comment>
<comment type="similarity">
    <text evidence="7">Belongs to the fibulin family.</text>
</comment>
<gene>
    <name type="primary">FBLN1</name>
</gene>
<keyword id="KW-0106">Calcium</keyword>
<keyword id="KW-1015">Disulfide bond</keyword>
<keyword id="KW-0245">EGF-like domain</keyword>
<keyword id="KW-0272">Extracellular matrix</keyword>
<keyword id="KW-0325">Glycoprotein</keyword>
<keyword id="KW-0677">Repeat</keyword>
<keyword id="KW-0964">Secreted</keyword>
<organism>
    <name type="scientific">Chlorocebus aethiops</name>
    <name type="common">Green monkey</name>
    <name type="synonym">Cercopithecus aethiops</name>
    <dbReference type="NCBI Taxonomy" id="9534"/>
    <lineage>
        <taxon>Eukaryota</taxon>
        <taxon>Metazoa</taxon>
        <taxon>Chordata</taxon>
        <taxon>Craniata</taxon>
        <taxon>Vertebrata</taxon>
        <taxon>Euteleostomi</taxon>
        <taxon>Mammalia</taxon>
        <taxon>Eutheria</taxon>
        <taxon>Euarchontoglires</taxon>
        <taxon>Primates</taxon>
        <taxon>Haplorrhini</taxon>
        <taxon>Catarrhini</taxon>
        <taxon>Cercopithecidae</taxon>
        <taxon>Cercopithecinae</taxon>
        <taxon>Chlorocebus</taxon>
    </lineage>
</organism>
<dbReference type="EMBL" id="AF395659">
    <property type="protein sequence ID" value="AAM90567.1"/>
    <property type="molecule type" value="mRNA"/>
</dbReference>
<dbReference type="GlyCosmos" id="Q8MJJ9">
    <property type="glycosylation" value="3 sites, No reported glycans"/>
</dbReference>
<dbReference type="GO" id="GO:0031012">
    <property type="term" value="C:extracellular matrix"/>
    <property type="evidence" value="ECO:0007669"/>
    <property type="project" value="UniProtKB-ARBA"/>
</dbReference>
<dbReference type="GO" id="GO:0005576">
    <property type="term" value="C:extracellular region"/>
    <property type="evidence" value="ECO:0007669"/>
    <property type="project" value="UniProtKB-KW"/>
</dbReference>
<dbReference type="GO" id="GO:0005509">
    <property type="term" value="F:calcium ion binding"/>
    <property type="evidence" value="ECO:0007669"/>
    <property type="project" value="InterPro"/>
</dbReference>
<dbReference type="GO" id="GO:0016504">
    <property type="term" value="F:peptidase activator activity"/>
    <property type="evidence" value="ECO:0007669"/>
    <property type="project" value="InterPro"/>
</dbReference>
<dbReference type="GO" id="GO:0030198">
    <property type="term" value="P:extracellular matrix organization"/>
    <property type="evidence" value="ECO:0007669"/>
    <property type="project" value="InterPro"/>
</dbReference>
<dbReference type="CDD" id="cd00017">
    <property type="entry name" value="ANATO"/>
    <property type="match status" value="1"/>
</dbReference>
<dbReference type="CDD" id="cd00054">
    <property type="entry name" value="EGF_CA"/>
    <property type="match status" value="2"/>
</dbReference>
<dbReference type="FunFam" id="2.10.25.10:FF:000078">
    <property type="entry name" value="Fibulin-1"/>
    <property type="match status" value="1"/>
</dbReference>
<dbReference type="FunFam" id="2.10.25.10:FF:000104">
    <property type="entry name" value="Fibulin-1"/>
    <property type="match status" value="2"/>
</dbReference>
<dbReference type="FunFam" id="2.10.25.10:FF:000108">
    <property type="entry name" value="Fibulin-1"/>
    <property type="match status" value="1"/>
</dbReference>
<dbReference type="FunFam" id="2.10.25.10:FF:000139">
    <property type="entry name" value="Fibulin-1"/>
    <property type="match status" value="1"/>
</dbReference>
<dbReference type="FunFam" id="2.10.25.10:FF:000150">
    <property type="entry name" value="Fibulin-1"/>
    <property type="match status" value="1"/>
</dbReference>
<dbReference type="FunFam" id="2.10.25.10:FF:000241">
    <property type="entry name" value="Fibulin-1"/>
    <property type="match status" value="1"/>
</dbReference>
<dbReference type="FunFam" id="2.10.25.10:FF:000257">
    <property type="entry name" value="Fibulin-1"/>
    <property type="match status" value="1"/>
</dbReference>
<dbReference type="FunFam" id="2.10.25.10:FF:000010">
    <property type="entry name" value="Pro-epidermal growth factor"/>
    <property type="match status" value="1"/>
</dbReference>
<dbReference type="Gene3D" id="2.10.25.10">
    <property type="entry name" value="Laminin"/>
    <property type="match status" value="9"/>
</dbReference>
<dbReference type="InterPro" id="IPR000020">
    <property type="entry name" value="Anaphylatoxin/fibulin"/>
</dbReference>
<dbReference type="InterPro" id="IPR026823">
    <property type="entry name" value="cEGF"/>
</dbReference>
<dbReference type="InterPro" id="IPR050751">
    <property type="entry name" value="ECM_structural_protein"/>
</dbReference>
<dbReference type="InterPro" id="IPR001881">
    <property type="entry name" value="EGF-like_Ca-bd_dom"/>
</dbReference>
<dbReference type="InterPro" id="IPR000742">
    <property type="entry name" value="EGF-like_dom"/>
</dbReference>
<dbReference type="InterPro" id="IPR000152">
    <property type="entry name" value="EGF-type_Asp/Asn_hydroxyl_site"/>
</dbReference>
<dbReference type="InterPro" id="IPR018097">
    <property type="entry name" value="EGF_Ca-bd_CS"/>
</dbReference>
<dbReference type="InterPro" id="IPR017048">
    <property type="entry name" value="Fibulin-1"/>
</dbReference>
<dbReference type="InterPro" id="IPR055088">
    <property type="entry name" value="Fibulin_C"/>
</dbReference>
<dbReference type="InterPro" id="IPR009030">
    <property type="entry name" value="Growth_fac_rcpt_cys_sf"/>
</dbReference>
<dbReference type="InterPro" id="IPR049883">
    <property type="entry name" value="NOTCH1_EGF-like"/>
</dbReference>
<dbReference type="PANTHER" id="PTHR24034:SF204">
    <property type="entry name" value="ADHESION G PROTEIN-COUPLED RECEPTOR E1"/>
    <property type="match status" value="1"/>
</dbReference>
<dbReference type="PANTHER" id="PTHR24034">
    <property type="entry name" value="EGF-LIKE DOMAIN-CONTAINING PROTEIN"/>
    <property type="match status" value="1"/>
</dbReference>
<dbReference type="Pfam" id="PF01821">
    <property type="entry name" value="ANATO"/>
    <property type="match status" value="1"/>
</dbReference>
<dbReference type="Pfam" id="PF12662">
    <property type="entry name" value="cEGF"/>
    <property type="match status" value="3"/>
</dbReference>
<dbReference type="Pfam" id="PF07645">
    <property type="entry name" value="EGF_CA"/>
    <property type="match status" value="4"/>
</dbReference>
<dbReference type="Pfam" id="PF22914">
    <property type="entry name" value="Fibulin_C"/>
    <property type="match status" value="1"/>
</dbReference>
<dbReference type="PIRSF" id="PIRSF036313">
    <property type="entry name" value="Fibulin-1"/>
    <property type="match status" value="1"/>
</dbReference>
<dbReference type="SMART" id="SM00104">
    <property type="entry name" value="ANATO"/>
    <property type="match status" value="1"/>
</dbReference>
<dbReference type="SMART" id="SM00181">
    <property type="entry name" value="EGF"/>
    <property type="match status" value="9"/>
</dbReference>
<dbReference type="SMART" id="SM00179">
    <property type="entry name" value="EGF_CA"/>
    <property type="match status" value="8"/>
</dbReference>
<dbReference type="SUPFAM" id="SSF57196">
    <property type="entry name" value="EGF/Laminin"/>
    <property type="match status" value="2"/>
</dbReference>
<dbReference type="SUPFAM" id="SSF57184">
    <property type="entry name" value="Growth factor receptor domain"/>
    <property type="match status" value="2"/>
</dbReference>
<dbReference type="PROSITE" id="PS01177">
    <property type="entry name" value="ANAPHYLATOXIN_1"/>
    <property type="match status" value="1"/>
</dbReference>
<dbReference type="PROSITE" id="PS01178">
    <property type="entry name" value="ANAPHYLATOXIN_2"/>
    <property type="match status" value="1"/>
</dbReference>
<dbReference type="PROSITE" id="PS00010">
    <property type="entry name" value="ASX_HYDROXYL"/>
    <property type="match status" value="4"/>
</dbReference>
<dbReference type="PROSITE" id="PS01186">
    <property type="entry name" value="EGF_2"/>
    <property type="match status" value="3"/>
</dbReference>
<dbReference type="PROSITE" id="PS50026">
    <property type="entry name" value="EGF_3"/>
    <property type="match status" value="4"/>
</dbReference>
<dbReference type="PROSITE" id="PS01187">
    <property type="entry name" value="EGF_CA"/>
    <property type="match status" value="7"/>
</dbReference>
<feature type="chain" id="PRO_0000007562" description="Fibulin-1">
    <location>
        <begin position="1" status="less than"/>
        <end position="598"/>
    </location>
</feature>
<feature type="domain" description="Anaphylatoxin-like 2" evidence="4">
    <location>
        <begin position="1" status="less than"/>
        <end position="27"/>
    </location>
</feature>
<feature type="domain" description="Anaphylatoxin-like 3" evidence="4">
    <location>
        <begin position="28"/>
        <end position="60"/>
    </location>
</feature>
<feature type="domain" description="EGF-like 1" evidence="5">
    <location>
        <begin position="92"/>
        <end position="131"/>
    </location>
</feature>
<feature type="domain" description="EGF-like 2; calcium-binding" evidence="5">
    <location>
        <begin position="132"/>
        <end position="177"/>
    </location>
</feature>
<feature type="domain" description="EGF-like 3; calcium-binding" evidence="5">
    <location>
        <begin position="178"/>
        <end position="223"/>
    </location>
</feature>
<feature type="domain" description="EGF-like 4; calcium-binding" evidence="5">
    <location>
        <begin position="224"/>
        <end position="270"/>
    </location>
</feature>
<feature type="domain" description="EGF-like 5; calcium-binding" evidence="5">
    <location>
        <begin position="271"/>
        <end position="313"/>
    </location>
</feature>
<feature type="domain" description="EGF-like 6; calcium-binding" evidence="5">
    <location>
        <begin position="314"/>
        <end position="355"/>
    </location>
</feature>
<feature type="domain" description="EGF-like 7; calcium-binding" evidence="5">
    <location>
        <begin position="356"/>
        <end position="395"/>
    </location>
</feature>
<feature type="domain" description="EGF-like 8; calcium-binding" evidence="5">
    <location>
        <begin position="396"/>
        <end position="439"/>
    </location>
</feature>
<feature type="domain" description="EGF-like 9; calcium-binding" evidence="5">
    <location>
        <begin position="440"/>
        <end position="484"/>
    </location>
</feature>
<feature type="region of interest" description="Self-association and FN1-binding" evidence="1">
    <location>
        <begin position="271"/>
        <end position="355"/>
    </location>
</feature>
<feature type="glycosylation site" description="N-linked (GlcNAc...) asparagine" evidence="3">
    <location>
        <position position="14"/>
    </location>
</feature>
<feature type="glycosylation site" description="N-linked (GlcNAc...) asparagine" evidence="3">
    <location>
        <position position="450"/>
    </location>
</feature>
<feature type="glycosylation site" description="N-linked (GlcNAc...) asparagine" evidence="3">
    <location>
        <position position="454"/>
    </location>
</feature>
<feature type="disulfide bond" evidence="1">
    <location>
        <begin position="1" status="less than"/>
        <end position="25"/>
    </location>
</feature>
<feature type="disulfide bond" evidence="1">
    <location>
        <begin position="7"/>
        <end position="26"/>
    </location>
</feature>
<feature type="disulfide bond" evidence="1">
    <location>
        <begin position="28"/>
        <end position="52"/>
    </location>
</feature>
<feature type="disulfide bond" evidence="1">
    <location>
        <begin position="29"/>
        <end position="59"/>
    </location>
</feature>
<feature type="disulfide bond" evidence="1">
    <location>
        <begin position="42"/>
        <end position="60"/>
    </location>
</feature>
<feature type="disulfide bond" evidence="1">
    <location>
        <begin position="96"/>
        <end position="106"/>
    </location>
</feature>
<feature type="disulfide bond" evidence="1">
    <location>
        <begin position="102"/>
        <end position="115"/>
    </location>
</feature>
<feature type="disulfide bond" evidence="1">
    <location>
        <begin position="117"/>
        <end position="130"/>
    </location>
</feature>
<feature type="disulfide bond" evidence="1">
    <location>
        <begin position="136"/>
        <end position="149"/>
    </location>
</feature>
<feature type="disulfide bond" evidence="1">
    <location>
        <begin position="143"/>
        <end position="158"/>
    </location>
</feature>
<feature type="disulfide bond" evidence="1">
    <location>
        <begin position="164"/>
        <end position="176"/>
    </location>
</feature>
<feature type="disulfide bond" evidence="1">
    <location>
        <begin position="182"/>
        <end position="195"/>
    </location>
</feature>
<feature type="disulfide bond" evidence="1">
    <location>
        <begin position="189"/>
        <end position="204"/>
    </location>
</feature>
<feature type="disulfide bond" evidence="1">
    <location>
        <begin position="210"/>
        <end position="222"/>
    </location>
</feature>
<feature type="disulfide bond" evidence="1">
    <location>
        <begin position="228"/>
        <end position="242"/>
    </location>
</feature>
<feature type="disulfide bond" evidence="1">
    <location>
        <begin position="257"/>
        <end position="270"/>
    </location>
</feature>
<feature type="disulfide bond" evidence="1">
    <location>
        <begin position="275"/>
        <end position="288"/>
    </location>
</feature>
<feature type="disulfide bond" evidence="1">
    <location>
        <begin position="282"/>
        <end position="297"/>
    </location>
</feature>
<feature type="disulfide bond" evidence="1">
    <location>
        <begin position="299"/>
        <end position="312"/>
    </location>
</feature>
<feature type="disulfide bond" evidence="1">
    <location>
        <begin position="318"/>
        <end position="330"/>
    </location>
</feature>
<feature type="disulfide bond" evidence="1">
    <location>
        <begin position="326"/>
        <end position="339"/>
    </location>
</feature>
<feature type="disulfide bond" evidence="1">
    <location>
        <begin position="341"/>
        <end position="354"/>
    </location>
</feature>
<feature type="disulfide bond" evidence="1">
    <location>
        <begin position="360"/>
        <end position="369"/>
    </location>
</feature>
<feature type="disulfide bond" evidence="1">
    <location>
        <begin position="365"/>
        <end position="378"/>
    </location>
</feature>
<feature type="disulfide bond" evidence="1">
    <location>
        <begin position="380"/>
        <end position="394"/>
    </location>
</feature>
<feature type="disulfide bond" evidence="1">
    <location>
        <begin position="400"/>
        <end position="413"/>
    </location>
</feature>
<feature type="disulfide bond" evidence="1">
    <location>
        <begin position="409"/>
        <end position="422"/>
    </location>
</feature>
<feature type="disulfide bond" evidence="1">
    <location>
        <begin position="424"/>
        <end position="438"/>
    </location>
</feature>
<feature type="disulfide bond" evidence="1">
    <location>
        <begin position="444"/>
        <end position="457"/>
    </location>
</feature>
<feature type="disulfide bond" evidence="1">
    <location>
        <begin position="451"/>
        <end position="466"/>
    </location>
</feature>
<feature type="disulfide bond" evidence="1">
    <location>
        <begin position="471"/>
        <end position="483"/>
    </location>
</feature>
<feature type="non-terminal residue">
    <location>
        <position position="1"/>
    </location>
</feature>